<dbReference type="EC" id="6.3.4.4" evidence="1"/>
<dbReference type="EMBL" id="CT978603">
    <property type="protein sequence ID" value="CAK27782.1"/>
    <property type="molecule type" value="Genomic_DNA"/>
</dbReference>
<dbReference type="SMR" id="A5GSC3"/>
<dbReference type="STRING" id="316278.SynRCC307_0879"/>
<dbReference type="KEGG" id="syr:SynRCC307_0879"/>
<dbReference type="eggNOG" id="COG0104">
    <property type="taxonomic scope" value="Bacteria"/>
</dbReference>
<dbReference type="HOGENOM" id="CLU_029848_0_0_3"/>
<dbReference type="OrthoDB" id="9807553at2"/>
<dbReference type="UniPathway" id="UPA00075">
    <property type="reaction ID" value="UER00335"/>
</dbReference>
<dbReference type="Proteomes" id="UP000001115">
    <property type="component" value="Chromosome"/>
</dbReference>
<dbReference type="GO" id="GO:0005737">
    <property type="term" value="C:cytoplasm"/>
    <property type="evidence" value="ECO:0007669"/>
    <property type="project" value="UniProtKB-SubCell"/>
</dbReference>
<dbReference type="GO" id="GO:0004019">
    <property type="term" value="F:adenylosuccinate synthase activity"/>
    <property type="evidence" value="ECO:0007669"/>
    <property type="project" value="UniProtKB-UniRule"/>
</dbReference>
<dbReference type="GO" id="GO:0005525">
    <property type="term" value="F:GTP binding"/>
    <property type="evidence" value="ECO:0007669"/>
    <property type="project" value="UniProtKB-UniRule"/>
</dbReference>
<dbReference type="GO" id="GO:0000287">
    <property type="term" value="F:magnesium ion binding"/>
    <property type="evidence" value="ECO:0007669"/>
    <property type="project" value="UniProtKB-UniRule"/>
</dbReference>
<dbReference type="GO" id="GO:0044208">
    <property type="term" value="P:'de novo' AMP biosynthetic process"/>
    <property type="evidence" value="ECO:0007669"/>
    <property type="project" value="UniProtKB-UniRule"/>
</dbReference>
<dbReference type="GO" id="GO:0046040">
    <property type="term" value="P:IMP metabolic process"/>
    <property type="evidence" value="ECO:0007669"/>
    <property type="project" value="TreeGrafter"/>
</dbReference>
<dbReference type="CDD" id="cd03108">
    <property type="entry name" value="AdSS"/>
    <property type="match status" value="1"/>
</dbReference>
<dbReference type="FunFam" id="1.10.300.10:FF:000001">
    <property type="entry name" value="Adenylosuccinate synthetase"/>
    <property type="match status" value="1"/>
</dbReference>
<dbReference type="FunFam" id="3.90.170.10:FF:000001">
    <property type="entry name" value="Adenylosuccinate synthetase"/>
    <property type="match status" value="1"/>
</dbReference>
<dbReference type="Gene3D" id="3.40.440.10">
    <property type="entry name" value="Adenylosuccinate Synthetase, subunit A, domain 1"/>
    <property type="match status" value="1"/>
</dbReference>
<dbReference type="Gene3D" id="1.10.300.10">
    <property type="entry name" value="Adenylosuccinate Synthetase, subunit A, domain 2"/>
    <property type="match status" value="1"/>
</dbReference>
<dbReference type="Gene3D" id="3.90.170.10">
    <property type="entry name" value="Adenylosuccinate Synthetase, subunit A, domain 3"/>
    <property type="match status" value="1"/>
</dbReference>
<dbReference type="HAMAP" id="MF_00011">
    <property type="entry name" value="Adenylosucc_synth"/>
    <property type="match status" value="1"/>
</dbReference>
<dbReference type="InterPro" id="IPR018220">
    <property type="entry name" value="Adenylosuccin_syn_GTP-bd"/>
</dbReference>
<dbReference type="InterPro" id="IPR033128">
    <property type="entry name" value="Adenylosuccin_syn_Lys_AS"/>
</dbReference>
<dbReference type="InterPro" id="IPR042109">
    <property type="entry name" value="Adenylosuccinate_synth_dom1"/>
</dbReference>
<dbReference type="InterPro" id="IPR042110">
    <property type="entry name" value="Adenylosuccinate_synth_dom2"/>
</dbReference>
<dbReference type="InterPro" id="IPR042111">
    <property type="entry name" value="Adenylosuccinate_synth_dom3"/>
</dbReference>
<dbReference type="InterPro" id="IPR001114">
    <property type="entry name" value="Adenylosuccinate_synthetase"/>
</dbReference>
<dbReference type="InterPro" id="IPR027417">
    <property type="entry name" value="P-loop_NTPase"/>
</dbReference>
<dbReference type="NCBIfam" id="NF002223">
    <property type="entry name" value="PRK01117.1"/>
    <property type="match status" value="1"/>
</dbReference>
<dbReference type="NCBIfam" id="TIGR00184">
    <property type="entry name" value="purA"/>
    <property type="match status" value="1"/>
</dbReference>
<dbReference type="PANTHER" id="PTHR11846">
    <property type="entry name" value="ADENYLOSUCCINATE SYNTHETASE"/>
    <property type="match status" value="1"/>
</dbReference>
<dbReference type="PANTHER" id="PTHR11846:SF0">
    <property type="entry name" value="ADENYLOSUCCINATE SYNTHETASE"/>
    <property type="match status" value="1"/>
</dbReference>
<dbReference type="Pfam" id="PF00709">
    <property type="entry name" value="Adenylsucc_synt"/>
    <property type="match status" value="1"/>
</dbReference>
<dbReference type="SMART" id="SM00788">
    <property type="entry name" value="Adenylsucc_synt"/>
    <property type="match status" value="1"/>
</dbReference>
<dbReference type="SUPFAM" id="SSF52540">
    <property type="entry name" value="P-loop containing nucleoside triphosphate hydrolases"/>
    <property type="match status" value="1"/>
</dbReference>
<dbReference type="PROSITE" id="PS01266">
    <property type="entry name" value="ADENYLOSUCCIN_SYN_1"/>
    <property type="match status" value="1"/>
</dbReference>
<dbReference type="PROSITE" id="PS00513">
    <property type="entry name" value="ADENYLOSUCCIN_SYN_2"/>
    <property type="match status" value="1"/>
</dbReference>
<name>PURA_SYNR3</name>
<comment type="function">
    <text evidence="1">Plays an important role in the de novo pathway of purine nucleotide biosynthesis. Catalyzes the first committed step in the biosynthesis of AMP from IMP.</text>
</comment>
<comment type="catalytic activity">
    <reaction evidence="1">
        <text>IMP + L-aspartate + GTP = N(6)-(1,2-dicarboxyethyl)-AMP + GDP + phosphate + 2 H(+)</text>
        <dbReference type="Rhea" id="RHEA:15753"/>
        <dbReference type="ChEBI" id="CHEBI:15378"/>
        <dbReference type="ChEBI" id="CHEBI:29991"/>
        <dbReference type="ChEBI" id="CHEBI:37565"/>
        <dbReference type="ChEBI" id="CHEBI:43474"/>
        <dbReference type="ChEBI" id="CHEBI:57567"/>
        <dbReference type="ChEBI" id="CHEBI:58053"/>
        <dbReference type="ChEBI" id="CHEBI:58189"/>
        <dbReference type="EC" id="6.3.4.4"/>
    </reaction>
</comment>
<comment type="cofactor">
    <cofactor evidence="1">
        <name>Mg(2+)</name>
        <dbReference type="ChEBI" id="CHEBI:18420"/>
    </cofactor>
    <text evidence="1">Binds 1 Mg(2+) ion per subunit.</text>
</comment>
<comment type="pathway">
    <text evidence="1">Purine metabolism; AMP biosynthesis via de novo pathway; AMP from IMP: step 1/2.</text>
</comment>
<comment type="subunit">
    <text evidence="1">Homodimer.</text>
</comment>
<comment type="subcellular location">
    <subcellularLocation>
        <location evidence="1">Cytoplasm</location>
    </subcellularLocation>
</comment>
<comment type="similarity">
    <text evidence="1">Belongs to the adenylosuccinate synthetase family.</text>
</comment>
<proteinExistence type="inferred from homology"/>
<gene>
    <name evidence="1" type="primary">purA</name>
    <name type="ordered locus">SynRCC307_0879</name>
</gene>
<reference key="1">
    <citation type="submission" date="2006-05" db="EMBL/GenBank/DDBJ databases">
        <authorList>
            <consortium name="Genoscope"/>
        </authorList>
    </citation>
    <scope>NUCLEOTIDE SEQUENCE [LARGE SCALE GENOMIC DNA]</scope>
    <source>
        <strain>RCC307</strain>
    </source>
</reference>
<accession>A5GSC3</accession>
<feature type="chain" id="PRO_1000000939" description="Adenylosuccinate synthetase">
    <location>
        <begin position="1"/>
        <end position="437"/>
    </location>
</feature>
<feature type="active site" description="Proton acceptor" evidence="1">
    <location>
        <position position="13"/>
    </location>
</feature>
<feature type="active site" description="Proton donor" evidence="1">
    <location>
        <position position="41"/>
    </location>
</feature>
<feature type="binding site" evidence="1">
    <location>
        <begin position="12"/>
        <end position="18"/>
    </location>
    <ligand>
        <name>GTP</name>
        <dbReference type="ChEBI" id="CHEBI:37565"/>
    </ligand>
</feature>
<feature type="binding site" description="in other chain" evidence="1">
    <location>
        <begin position="13"/>
        <end position="16"/>
    </location>
    <ligand>
        <name>IMP</name>
        <dbReference type="ChEBI" id="CHEBI:58053"/>
        <note>ligand shared between dimeric partners</note>
    </ligand>
</feature>
<feature type="binding site" evidence="1">
    <location>
        <position position="13"/>
    </location>
    <ligand>
        <name>Mg(2+)</name>
        <dbReference type="ChEBI" id="CHEBI:18420"/>
    </ligand>
</feature>
<feature type="binding site" description="in other chain" evidence="1">
    <location>
        <begin position="38"/>
        <end position="41"/>
    </location>
    <ligand>
        <name>IMP</name>
        <dbReference type="ChEBI" id="CHEBI:58053"/>
        <note>ligand shared between dimeric partners</note>
    </ligand>
</feature>
<feature type="binding site" evidence="1">
    <location>
        <begin position="40"/>
        <end position="42"/>
    </location>
    <ligand>
        <name>GTP</name>
        <dbReference type="ChEBI" id="CHEBI:37565"/>
    </ligand>
</feature>
<feature type="binding site" evidence="1">
    <location>
        <position position="40"/>
    </location>
    <ligand>
        <name>Mg(2+)</name>
        <dbReference type="ChEBI" id="CHEBI:18420"/>
    </ligand>
</feature>
<feature type="binding site" description="in other chain" evidence="1">
    <location>
        <position position="128"/>
    </location>
    <ligand>
        <name>IMP</name>
        <dbReference type="ChEBI" id="CHEBI:58053"/>
        <note>ligand shared between dimeric partners</note>
    </ligand>
</feature>
<feature type="binding site" evidence="1">
    <location>
        <position position="142"/>
    </location>
    <ligand>
        <name>IMP</name>
        <dbReference type="ChEBI" id="CHEBI:58053"/>
        <note>ligand shared between dimeric partners</note>
    </ligand>
</feature>
<feature type="binding site" description="in other chain" evidence="1">
    <location>
        <position position="223"/>
    </location>
    <ligand>
        <name>IMP</name>
        <dbReference type="ChEBI" id="CHEBI:58053"/>
        <note>ligand shared between dimeric partners</note>
    </ligand>
</feature>
<feature type="binding site" description="in other chain" evidence="1">
    <location>
        <position position="238"/>
    </location>
    <ligand>
        <name>IMP</name>
        <dbReference type="ChEBI" id="CHEBI:58053"/>
        <note>ligand shared between dimeric partners</note>
    </ligand>
</feature>
<feature type="binding site" evidence="1">
    <location>
        <begin position="298"/>
        <end position="304"/>
    </location>
    <ligand>
        <name>substrate</name>
    </ligand>
</feature>
<feature type="binding site" description="in other chain" evidence="1">
    <location>
        <position position="302"/>
    </location>
    <ligand>
        <name>IMP</name>
        <dbReference type="ChEBI" id="CHEBI:58053"/>
        <note>ligand shared between dimeric partners</note>
    </ligand>
</feature>
<feature type="binding site" evidence="1">
    <location>
        <position position="304"/>
    </location>
    <ligand>
        <name>GTP</name>
        <dbReference type="ChEBI" id="CHEBI:37565"/>
    </ligand>
</feature>
<feature type="binding site" evidence="1">
    <location>
        <begin position="330"/>
        <end position="332"/>
    </location>
    <ligand>
        <name>GTP</name>
        <dbReference type="ChEBI" id="CHEBI:37565"/>
    </ligand>
</feature>
<feature type="binding site" evidence="1">
    <location>
        <begin position="412"/>
        <end position="414"/>
    </location>
    <ligand>
        <name>GTP</name>
        <dbReference type="ChEBI" id="CHEBI:37565"/>
    </ligand>
</feature>
<protein>
    <recommendedName>
        <fullName evidence="1">Adenylosuccinate synthetase</fullName>
        <shortName evidence="1">AMPSase</shortName>
        <shortName evidence="1">AdSS</shortName>
        <ecNumber evidence="1">6.3.4.4</ecNumber>
    </recommendedName>
    <alternativeName>
        <fullName evidence="1">IMP--aspartate ligase</fullName>
    </alternativeName>
</protein>
<sequence length="437" mass="47108">MANVVVIGAQWGDEGKGKITDLLSRSADVVVRYQGGVNAGHTIVVDGQVLKLHLIPSGILYPDTTCLIGSGTVVDPKVLLGELAMLASNDIDASGLKVASTAHVTLPYHRLLDQAMEQQRGNQRIGTTGRGIGPTYSDKAERSGLRMIDLLDEQLLRERLQGPIAAKNLQLQKLYGLEPLDAEEVIAEYADYGRRLSSHVVDCTRAIHDAARARKNILFEGAQGTLLDLDHGTYPYVTSSNPVAGGACIGAGVGPTLIDRVIGVAKAYTTRVGEGPFPTELEGSLSDHLCDRGGEYGTTTGRRRRCGWFDGVIGRYAVEVNGLDCLAITKLDVLDELDEIQVCVAYELDGQRVNHFPSSASEFARCQPVFETLPGWQTSTADCRSLDDLPEKAMSYLRFLADLMEVPIAIVSLGASRDQTIVVEDPIHGPKRALLSA</sequence>
<evidence type="ECO:0000255" key="1">
    <source>
        <dbReference type="HAMAP-Rule" id="MF_00011"/>
    </source>
</evidence>
<organism>
    <name type="scientific">Synechococcus sp. (strain RCC307)</name>
    <dbReference type="NCBI Taxonomy" id="316278"/>
    <lineage>
        <taxon>Bacteria</taxon>
        <taxon>Bacillati</taxon>
        <taxon>Cyanobacteriota</taxon>
        <taxon>Cyanophyceae</taxon>
        <taxon>Synechococcales</taxon>
        <taxon>Synechococcaceae</taxon>
        <taxon>Synechococcus</taxon>
    </lineage>
</organism>
<keyword id="KW-0963">Cytoplasm</keyword>
<keyword id="KW-0342">GTP-binding</keyword>
<keyword id="KW-0436">Ligase</keyword>
<keyword id="KW-0460">Magnesium</keyword>
<keyword id="KW-0479">Metal-binding</keyword>
<keyword id="KW-0547">Nucleotide-binding</keyword>
<keyword id="KW-0658">Purine biosynthesis</keyword>
<keyword id="KW-1185">Reference proteome</keyword>